<gene>
    <name evidence="6" type="primary">lon-8</name>
    <name evidence="6" type="ORF">Y59A8B.20</name>
</gene>
<feature type="signal peptide" evidence="1">
    <location>
        <begin position="1"/>
        <end position="23"/>
    </location>
</feature>
<feature type="chain" id="PRO_5006953821" description="Protein lon-8" evidence="3">
    <location>
        <begin position="24"/>
        <end position="162"/>
    </location>
</feature>
<sequence length="162" mass="18463">MRNSRFCAILAVISAISVSYVLAQRSQQSVIADLGKLIVDNCPPMLCTGLDCAVVTERNGCQLCACPIGSPSRGCDPMPFILWHDLIVNGCPNVTLNSRDPAQKVHRWFRRVNRFTNTDQCEPYIFPYCPELDFNLWRSPRTKQECELYCYSIDEQRKRGII</sequence>
<organism evidence="5">
    <name type="scientific">Caenorhabditis elegans</name>
    <dbReference type="NCBI Taxonomy" id="6239"/>
    <lineage>
        <taxon>Eukaryota</taxon>
        <taxon>Metazoa</taxon>
        <taxon>Ecdysozoa</taxon>
        <taxon>Nematoda</taxon>
        <taxon>Chromadorea</taxon>
        <taxon>Rhabditida</taxon>
        <taxon>Rhabditina</taxon>
        <taxon>Rhabditomorpha</taxon>
        <taxon>Rhabditoidea</taxon>
        <taxon>Rhabditidae</taxon>
        <taxon>Peloderinae</taxon>
        <taxon>Caenorhabditis</taxon>
    </lineage>
</organism>
<comment type="function">
    <text evidence="2">Secreted protein that is involved in larval elongation, early adult growth and male tail development.</text>
</comment>
<comment type="subcellular location">
    <subcellularLocation>
        <location evidence="2">Secreted</location>
    </subcellularLocation>
</comment>
<comment type="developmental stage">
    <text evidence="2">Expressed in the hypodermal regions hyp4 and hyp7 from the comma stage of embryogenesis and subsequently throughout development.</text>
</comment>
<comment type="disruption phenotype">
    <text evidence="2">Mutants display an increased body growth rate during larval development and male tail morphological defects characterized by thickening of the male rays, with rays 5 and 6 the most severely affected in most cases. RNAi-mediated knockdown results in increased body length.</text>
</comment>
<dbReference type="EMBL" id="EF495354">
    <property type="protein sequence ID" value="ABP48104.1"/>
    <property type="molecule type" value="mRNA"/>
</dbReference>
<dbReference type="EMBL" id="BX284605">
    <property type="protein sequence ID" value="CAB60948.3"/>
    <property type="molecule type" value="Genomic_DNA"/>
</dbReference>
<dbReference type="RefSeq" id="NP_507520.3">
    <property type="nucleotide sequence ID" value="NM_075119.5"/>
</dbReference>
<dbReference type="FunCoup" id="G5EGH7">
    <property type="interactions" value="171"/>
</dbReference>
<dbReference type="STRING" id="6239.Y59A8B.20.1"/>
<dbReference type="PaxDb" id="6239-Y59A8B.20"/>
<dbReference type="PeptideAtlas" id="G5EGH7"/>
<dbReference type="EnsemblMetazoa" id="Y59A8B.20.1">
    <property type="protein sequence ID" value="Y59A8B.20.1"/>
    <property type="gene ID" value="WBGene00013352"/>
</dbReference>
<dbReference type="GeneID" id="190397"/>
<dbReference type="KEGG" id="cel:CELE_Y59A8B.20"/>
<dbReference type="AGR" id="WB:WBGene00013352"/>
<dbReference type="CTD" id="190397"/>
<dbReference type="WormBase" id="Y59A8B.20">
    <property type="protein sequence ID" value="CE41522"/>
    <property type="gene ID" value="WBGene00013352"/>
    <property type="gene designation" value="lon-8"/>
</dbReference>
<dbReference type="eggNOG" id="ENOG502RXJI">
    <property type="taxonomic scope" value="Eukaryota"/>
</dbReference>
<dbReference type="HOGENOM" id="CLU_1654083_0_0_1"/>
<dbReference type="InParanoid" id="G5EGH7"/>
<dbReference type="OMA" id="YCAELDF"/>
<dbReference type="OrthoDB" id="5774963at2759"/>
<dbReference type="PRO" id="PR:G5EGH7"/>
<dbReference type="Proteomes" id="UP000001940">
    <property type="component" value="Chromosome V"/>
</dbReference>
<dbReference type="Bgee" id="WBGene00013352">
    <property type="expression patterns" value="Expressed in larva and 3 other cell types or tissues"/>
</dbReference>
<dbReference type="GO" id="GO:0005615">
    <property type="term" value="C:extracellular space"/>
    <property type="evidence" value="ECO:0000250"/>
    <property type="project" value="WormBase"/>
</dbReference>
<dbReference type="GO" id="GO:0040015">
    <property type="term" value="P:negative regulation of multicellular organism growth"/>
    <property type="evidence" value="ECO:0000315"/>
    <property type="project" value="WormBase"/>
</dbReference>
<dbReference type="GO" id="GO:0045138">
    <property type="term" value="P:nematode male tail tip morphogenesis"/>
    <property type="evidence" value="ECO:0000315"/>
    <property type="project" value="WormBase"/>
</dbReference>
<dbReference type="Pfam" id="PF25315">
    <property type="entry name" value="BPTI_nem"/>
    <property type="match status" value="1"/>
</dbReference>
<evidence type="ECO:0000255" key="1"/>
<evidence type="ECO:0000269" key="2">
    <source>
    </source>
</evidence>
<evidence type="ECO:0000305" key="3"/>
<evidence type="ECO:0000312" key="4">
    <source>
        <dbReference type="EMBL" id="ABP48104.1"/>
    </source>
</evidence>
<evidence type="ECO:0000312" key="5">
    <source>
        <dbReference type="Proteomes" id="UP000001940"/>
    </source>
</evidence>
<evidence type="ECO:0000312" key="6">
    <source>
        <dbReference type="WormBase" id="Y59A8B.20"/>
    </source>
</evidence>
<accession>G5EGH7</accession>
<reference evidence="4" key="1">
    <citation type="journal article" date="2007" name="BMC Dev. Biol.">
        <title>Regulation of Caenorhabditis elegans body size and male tail development by the novel gene lon-8.</title>
        <authorList>
            <person name="Soete G."/>
            <person name="Betist M.C."/>
            <person name="Korswagen H.C."/>
        </authorList>
    </citation>
    <scope>NUCLEOTIDE SEQUENCE [MRNA]</scope>
    <scope>FUNCTION</scope>
    <scope>SUBCELLULAR LOCATION</scope>
    <scope>DEVELOPMENTAL STAGE</scope>
    <scope>DISRUPTION PHENOTYPE</scope>
</reference>
<reference evidence="5" key="2">
    <citation type="journal article" date="1998" name="Science">
        <title>Genome sequence of the nematode C. elegans: a platform for investigating biology.</title>
        <authorList>
            <consortium name="The C. elegans sequencing consortium"/>
        </authorList>
    </citation>
    <scope>NUCLEOTIDE SEQUENCE [LARGE SCALE GENOMIC DNA]</scope>
    <source>
        <strain evidence="5">Bristol N2</strain>
    </source>
</reference>
<protein>
    <recommendedName>
        <fullName evidence="6">Protein lon-8</fullName>
    </recommendedName>
</protein>
<keyword id="KW-1185">Reference proteome</keyword>
<keyword id="KW-0964">Secreted</keyword>
<keyword id="KW-0732">Signal</keyword>
<proteinExistence type="evidence at transcript level"/>
<name>LON8_CAEEL</name>